<feature type="chain" id="PRO_0000375660" description="Succinyl-diaminopimelate desuccinylase">
    <location>
        <begin position="1"/>
        <end position="380"/>
    </location>
</feature>
<feature type="active site" evidence="1">
    <location>
        <position position="72"/>
    </location>
</feature>
<feature type="active site" description="Proton acceptor" evidence="1">
    <location>
        <position position="138"/>
    </location>
</feature>
<feature type="binding site" evidence="1">
    <location>
        <position position="70"/>
    </location>
    <ligand>
        <name>Zn(2+)</name>
        <dbReference type="ChEBI" id="CHEBI:29105"/>
        <label>1</label>
    </ligand>
</feature>
<feature type="binding site" evidence="1">
    <location>
        <position position="104"/>
    </location>
    <ligand>
        <name>Zn(2+)</name>
        <dbReference type="ChEBI" id="CHEBI:29105"/>
        <label>1</label>
    </ligand>
</feature>
<feature type="binding site" evidence="1">
    <location>
        <position position="104"/>
    </location>
    <ligand>
        <name>Zn(2+)</name>
        <dbReference type="ChEBI" id="CHEBI:29105"/>
        <label>2</label>
    </ligand>
</feature>
<feature type="binding site" evidence="1">
    <location>
        <position position="139"/>
    </location>
    <ligand>
        <name>Zn(2+)</name>
        <dbReference type="ChEBI" id="CHEBI:29105"/>
        <label>2</label>
    </ligand>
</feature>
<feature type="binding site" evidence="1">
    <location>
        <position position="167"/>
    </location>
    <ligand>
        <name>Zn(2+)</name>
        <dbReference type="ChEBI" id="CHEBI:29105"/>
        <label>1</label>
    </ligand>
</feature>
<feature type="binding site" evidence="1">
    <location>
        <position position="353"/>
    </location>
    <ligand>
        <name>Zn(2+)</name>
        <dbReference type="ChEBI" id="CHEBI:29105"/>
        <label>2</label>
    </ligand>
</feature>
<gene>
    <name evidence="1" type="primary">dapE</name>
    <name type="ordered locus">Pmen_3066</name>
</gene>
<reference key="1">
    <citation type="submission" date="2007-04" db="EMBL/GenBank/DDBJ databases">
        <title>Complete sequence of Pseudomonas mendocina ymp.</title>
        <authorList>
            <consortium name="US DOE Joint Genome Institute"/>
            <person name="Copeland A."/>
            <person name="Lucas S."/>
            <person name="Lapidus A."/>
            <person name="Barry K."/>
            <person name="Glavina del Rio T."/>
            <person name="Dalin E."/>
            <person name="Tice H."/>
            <person name="Pitluck S."/>
            <person name="Kiss H."/>
            <person name="Brettin T."/>
            <person name="Detter J.C."/>
            <person name="Bruce D."/>
            <person name="Han C."/>
            <person name="Schmutz J."/>
            <person name="Larimer F."/>
            <person name="Land M."/>
            <person name="Hauser L."/>
            <person name="Kyrpides N."/>
            <person name="Mikhailova N."/>
            <person name="Hersman L."/>
            <person name="Dubois J."/>
            <person name="Maurice P."/>
            <person name="Richardson P."/>
        </authorList>
    </citation>
    <scope>NUCLEOTIDE SEQUENCE [LARGE SCALE GENOMIC DNA]</scope>
    <source>
        <strain>ymp</strain>
    </source>
</reference>
<organism>
    <name type="scientific">Ectopseudomonas mendocina (strain ymp)</name>
    <name type="common">Pseudomonas mendocina</name>
    <dbReference type="NCBI Taxonomy" id="399739"/>
    <lineage>
        <taxon>Bacteria</taxon>
        <taxon>Pseudomonadati</taxon>
        <taxon>Pseudomonadota</taxon>
        <taxon>Gammaproteobacteria</taxon>
        <taxon>Pseudomonadales</taxon>
        <taxon>Pseudomonadaceae</taxon>
        <taxon>Ectopseudomonas</taxon>
    </lineage>
</organism>
<keyword id="KW-0028">Amino-acid biosynthesis</keyword>
<keyword id="KW-0170">Cobalt</keyword>
<keyword id="KW-0220">Diaminopimelate biosynthesis</keyword>
<keyword id="KW-0378">Hydrolase</keyword>
<keyword id="KW-0457">Lysine biosynthesis</keyword>
<keyword id="KW-0479">Metal-binding</keyword>
<keyword id="KW-0862">Zinc</keyword>
<accession>A4XWV4</accession>
<sequence length="380" mass="41320">MTATLTPTLELAFDLIRRPSVTPVDEGCQELMMRRLAACGFEVERMRIEEVENFWAKRGGDGPVLCFAGHTDVVPTGPLDAWQYQPFDVRVDEEGMLCGRGAADMKGSLASMIVAVERFVADYPNHRGAISFLITSDEEGPAQHGTKAVVERLRERSERLDWCIVGEPSSTTLLGDVVKNGRRGSLGCTLTVYGKQGHVAYPHLAKNPIHLAAPALAELAAEHWDHGNDYFPPTSFQVSNLNSGTGATNVIPGELKAVFNFRFSTESTVEGLQQRVTAILDKHGLDYHLEWALSGLPFLTQPGELLDAVAASIKNVTGRDTTPSTSGGTSDGRFIATLGTQVVELGPVNATIHQINERVLASDLDLLTEVYYQTMVKLLA</sequence>
<comment type="function">
    <text evidence="1">Catalyzes the hydrolysis of N-succinyl-L,L-diaminopimelic acid (SDAP), forming succinate and LL-2,6-diaminopimelate (DAP), an intermediate involved in the bacterial biosynthesis of lysine and meso-diaminopimelic acid, an essential component of bacterial cell walls.</text>
</comment>
<comment type="catalytic activity">
    <reaction evidence="1">
        <text>N-succinyl-(2S,6S)-2,6-diaminopimelate + H2O = (2S,6S)-2,6-diaminopimelate + succinate</text>
        <dbReference type="Rhea" id="RHEA:22608"/>
        <dbReference type="ChEBI" id="CHEBI:15377"/>
        <dbReference type="ChEBI" id="CHEBI:30031"/>
        <dbReference type="ChEBI" id="CHEBI:57609"/>
        <dbReference type="ChEBI" id="CHEBI:58087"/>
        <dbReference type="EC" id="3.5.1.18"/>
    </reaction>
</comment>
<comment type="cofactor">
    <cofactor evidence="1">
        <name>Zn(2+)</name>
        <dbReference type="ChEBI" id="CHEBI:29105"/>
    </cofactor>
    <cofactor evidence="1">
        <name>Co(2+)</name>
        <dbReference type="ChEBI" id="CHEBI:48828"/>
    </cofactor>
    <text evidence="1">Binds 2 Zn(2+) or Co(2+) ions per subunit.</text>
</comment>
<comment type="pathway">
    <text evidence="1">Amino-acid biosynthesis; L-lysine biosynthesis via DAP pathway; LL-2,6-diaminopimelate from (S)-tetrahydrodipicolinate (succinylase route): step 3/3.</text>
</comment>
<comment type="subunit">
    <text evidence="1">Homodimer.</text>
</comment>
<comment type="similarity">
    <text evidence="1">Belongs to the peptidase M20A family. DapE subfamily.</text>
</comment>
<protein>
    <recommendedName>
        <fullName evidence="1">Succinyl-diaminopimelate desuccinylase</fullName>
        <shortName evidence="1">SDAP desuccinylase</shortName>
        <ecNumber evidence="1">3.5.1.18</ecNumber>
    </recommendedName>
    <alternativeName>
        <fullName evidence="1">N-succinyl-LL-2,6-diaminoheptanedioate amidohydrolase</fullName>
    </alternativeName>
</protein>
<proteinExistence type="inferred from homology"/>
<name>DAPE_ECTM1</name>
<evidence type="ECO:0000255" key="1">
    <source>
        <dbReference type="HAMAP-Rule" id="MF_01690"/>
    </source>
</evidence>
<dbReference type="EC" id="3.5.1.18" evidence="1"/>
<dbReference type="EMBL" id="CP000680">
    <property type="protein sequence ID" value="ABP85820.1"/>
    <property type="molecule type" value="Genomic_DNA"/>
</dbReference>
<dbReference type="SMR" id="A4XWV4"/>
<dbReference type="STRING" id="399739.Pmen_3066"/>
<dbReference type="MEROPS" id="M20.010"/>
<dbReference type="KEGG" id="pmy:Pmen_3066"/>
<dbReference type="PATRIC" id="fig|399739.8.peg.3112"/>
<dbReference type="eggNOG" id="COG0624">
    <property type="taxonomic scope" value="Bacteria"/>
</dbReference>
<dbReference type="HOGENOM" id="CLU_021802_4_0_6"/>
<dbReference type="OrthoDB" id="9809784at2"/>
<dbReference type="UniPathway" id="UPA00034">
    <property type="reaction ID" value="UER00021"/>
</dbReference>
<dbReference type="GO" id="GO:0008777">
    <property type="term" value="F:acetylornithine deacetylase activity"/>
    <property type="evidence" value="ECO:0007669"/>
    <property type="project" value="TreeGrafter"/>
</dbReference>
<dbReference type="GO" id="GO:0050897">
    <property type="term" value="F:cobalt ion binding"/>
    <property type="evidence" value="ECO:0007669"/>
    <property type="project" value="UniProtKB-UniRule"/>
</dbReference>
<dbReference type="GO" id="GO:0009014">
    <property type="term" value="F:succinyl-diaminopimelate desuccinylase activity"/>
    <property type="evidence" value="ECO:0007669"/>
    <property type="project" value="UniProtKB-UniRule"/>
</dbReference>
<dbReference type="GO" id="GO:0008270">
    <property type="term" value="F:zinc ion binding"/>
    <property type="evidence" value="ECO:0007669"/>
    <property type="project" value="UniProtKB-UniRule"/>
</dbReference>
<dbReference type="GO" id="GO:0019877">
    <property type="term" value="P:diaminopimelate biosynthetic process"/>
    <property type="evidence" value="ECO:0007669"/>
    <property type="project" value="UniProtKB-UniRule"/>
</dbReference>
<dbReference type="GO" id="GO:0006526">
    <property type="term" value="P:L-arginine biosynthetic process"/>
    <property type="evidence" value="ECO:0007669"/>
    <property type="project" value="TreeGrafter"/>
</dbReference>
<dbReference type="GO" id="GO:0009089">
    <property type="term" value="P:lysine biosynthetic process via diaminopimelate"/>
    <property type="evidence" value="ECO:0007669"/>
    <property type="project" value="UniProtKB-UniRule"/>
</dbReference>
<dbReference type="CDD" id="cd03891">
    <property type="entry name" value="M20_DapE_proteobac"/>
    <property type="match status" value="1"/>
</dbReference>
<dbReference type="FunFam" id="3.30.70.360:FF:000011">
    <property type="entry name" value="Succinyl-diaminopimelate desuccinylase"/>
    <property type="match status" value="1"/>
</dbReference>
<dbReference type="FunFam" id="3.40.630.10:FF:000005">
    <property type="entry name" value="Succinyl-diaminopimelate desuccinylase"/>
    <property type="match status" value="1"/>
</dbReference>
<dbReference type="FunFam" id="3.40.630.10:FF:000010">
    <property type="entry name" value="Succinyl-diaminopimelate desuccinylase"/>
    <property type="match status" value="1"/>
</dbReference>
<dbReference type="Gene3D" id="1.10.150.900">
    <property type="match status" value="1"/>
</dbReference>
<dbReference type="Gene3D" id="3.30.70.360">
    <property type="match status" value="1"/>
</dbReference>
<dbReference type="Gene3D" id="3.40.630.10">
    <property type="entry name" value="Zn peptidases"/>
    <property type="match status" value="1"/>
</dbReference>
<dbReference type="HAMAP" id="MF_01690">
    <property type="entry name" value="DapE"/>
    <property type="match status" value="1"/>
</dbReference>
<dbReference type="InterPro" id="IPR001261">
    <property type="entry name" value="ArgE/DapE_CS"/>
</dbReference>
<dbReference type="InterPro" id="IPR036264">
    <property type="entry name" value="Bact_exopeptidase_dim_dom"/>
</dbReference>
<dbReference type="InterPro" id="IPR005941">
    <property type="entry name" value="DapE_proteobac"/>
</dbReference>
<dbReference type="InterPro" id="IPR002933">
    <property type="entry name" value="Peptidase_M20"/>
</dbReference>
<dbReference type="InterPro" id="IPR011650">
    <property type="entry name" value="Peptidase_M20_dimer"/>
</dbReference>
<dbReference type="InterPro" id="IPR050072">
    <property type="entry name" value="Peptidase_M20A"/>
</dbReference>
<dbReference type="NCBIfam" id="TIGR01246">
    <property type="entry name" value="dapE_proteo"/>
    <property type="match status" value="1"/>
</dbReference>
<dbReference type="NCBIfam" id="NF009557">
    <property type="entry name" value="PRK13009.1"/>
    <property type="match status" value="1"/>
</dbReference>
<dbReference type="PANTHER" id="PTHR43808">
    <property type="entry name" value="ACETYLORNITHINE DEACETYLASE"/>
    <property type="match status" value="1"/>
</dbReference>
<dbReference type="PANTHER" id="PTHR43808:SF31">
    <property type="entry name" value="N-ACETYL-L-CITRULLINE DEACETYLASE"/>
    <property type="match status" value="1"/>
</dbReference>
<dbReference type="Pfam" id="PF07687">
    <property type="entry name" value="M20_dimer"/>
    <property type="match status" value="1"/>
</dbReference>
<dbReference type="Pfam" id="PF01546">
    <property type="entry name" value="Peptidase_M20"/>
    <property type="match status" value="1"/>
</dbReference>
<dbReference type="SUPFAM" id="SSF55031">
    <property type="entry name" value="Bacterial exopeptidase dimerisation domain"/>
    <property type="match status" value="1"/>
</dbReference>
<dbReference type="SUPFAM" id="SSF53187">
    <property type="entry name" value="Zn-dependent exopeptidases"/>
    <property type="match status" value="1"/>
</dbReference>
<dbReference type="PROSITE" id="PS00759">
    <property type="entry name" value="ARGE_DAPE_CPG2_2"/>
    <property type="match status" value="1"/>
</dbReference>